<organism>
    <name type="scientific">Koribacter versatilis (strain Ellin345)</name>
    <dbReference type="NCBI Taxonomy" id="204669"/>
    <lineage>
        <taxon>Bacteria</taxon>
        <taxon>Pseudomonadati</taxon>
        <taxon>Acidobacteriota</taxon>
        <taxon>Terriglobia</taxon>
        <taxon>Terriglobales</taxon>
        <taxon>Candidatus Korobacteraceae</taxon>
        <taxon>Candidatus Korobacter</taxon>
    </lineage>
</organism>
<comment type="function">
    <text evidence="1">Functions in the biosynthesis of branched-chain amino acids. Catalyzes the dehydration of (2R,3R)-2,3-dihydroxy-3-methylpentanoate (2,3-dihydroxy-3-methylvalerate) into 2-oxo-3-methylpentanoate (2-oxo-3-methylvalerate) and of (2R)-2,3-dihydroxy-3-methylbutanoate (2,3-dihydroxyisovalerate) into 2-oxo-3-methylbutanoate (2-oxoisovalerate), the penultimate precursor to L-isoleucine and L-valine, respectively.</text>
</comment>
<comment type="catalytic activity">
    <reaction evidence="1">
        <text>(2R)-2,3-dihydroxy-3-methylbutanoate = 3-methyl-2-oxobutanoate + H2O</text>
        <dbReference type="Rhea" id="RHEA:24809"/>
        <dbReference type="ChEBI" id="CHEBI:11851"/>
        <dbReference type="ChEBI" id="CHEBI:15377"/>
        <dbReference type="ChEBI" id="CHEBI:49072"/>
        <dbReference type="EC" id="4.2.1.9"/>
    </reaction>
    <physiologicalReaction direction="left-to-right" evidence="1">
        <dbReference type="Rhea" id="RHEA:24810"/>
    </physiologicalReaction>
</comment>
<comment type="catalytic activity">
    <reaction evidence="1">
        <text>(2R,3R)-2,3-dihydroxy-3-methylpentanoate = (S)-3-methyl-2-oxopentanoate + H2O</text>
        <dbReference type="Rhea" id="RHEA:27694"/>
        <dbReference type="ChEBI" id="CHEBI:15377"/>
        <dbReference type="ChEBI" id="CHEBI:35146"/>
        <dbReference type="ChEBI" id="CHEBI:49258"/>
        <dbReference type="EC" id="4.2.1.9"/>
    </reaction>
    <physiologicalReaction direction="left-to-right" evidence="1">
        <dbReference type="Rhea" id="RHEA:27695"/>
    </physiologicalReaction>
</comment>
<comment type="cofactor">
    <cofactor evidence="1">
        <name>[2Fe-2S] cluster</name>
        <dbReference type="ChEBI" id="CHEBI:190135"/>
    </cofactor>
    <text evidence="1">Binds 1 [2Fe-2S] cluster per subunit. This cluster acts as a Lewis acid cofactor.</text>
</comment>
<comment type="cofactor">
    <cofactor evidence="1">
        <name>Mg(2+)</name>
        <dbReference type="ChEBI" id="CHEBI:18420"/>
    </cofactor>
</comment>
<comment type="pathway">
    <text evidence="1">Amino-acid biosynthesis; L-isoleucine biosynthesis; L-isoleucine from 2-oxobutanoate: step 3/4.</text>
</comment>
<comment type="pathway">
    <text evidence="1">Amino-acid biosynthesis; L-valine biosynthesis; L-valine from pyruvate: step 3/4.</text>
</comment>
<comment type="subunit">
    <text evidence="1">Homodimer.</text>
</comment>
<comment type="similarity">
    <text evidence="1">Belongs to the IlvD/Edd family.</text>
</comment>
<protein>
    <recommendedName>
        <fullName evidence="1">Dihydroxy-acid dehydratase</fullName>
        <shortName evidence="1">DAD</shortName>
        <ecNumber evidence="1">4.2.1.9</ecNumber>
    </recommendedName>
</protein>
<proteinExistence type="inferred from homology"/>
<reference key="1">
    <citation type="journal article" date="2009" name="Appl. Environ. Microbiol.">
        <title>Three genomes from the phylum Acidobacteria provide insight into the lifestyles of these microorganisms in soils.</title>
        <authorList>
            <person name="Ward N.L."/>
            <person name="Challacombe J.F."/>
            <person name="Janssen P.H."/>
            <person name="Henrissat B."/>
            <person name="Coutinho P.M."/>
            <person name="Wu M."/>
            <person name="Xie G."/>
            <person name="Haft D.H."/>
            <person name="Sait M."/>
            <person name="Badger J."/>
            <person name="Barabote R.D."/>
            <person name="Bradley B."/>
            <person name="Brettin T.S."/>
            <person name="Brinkac L.M."/>
            <person name="Bruce D."/>
            <person name="Creasy T."/>
            <person name="Daugherty S.C."/>
            <person name="Davidsen T.M."/>
            <person name="DeBoy R.T."/>
            <person name="Detter J.C."/>
            <person name="Dodson R.J."/>
            <person name="Durkin A.S."/>
            <person name="Ganapathy A."/>
            <person name="Gwinn-Giglio M."/>
            <person name="Han C.S."/>
            <person name="Khouri H."/>
            <person name="Kiss H."/>
            <person name="Kothari S.P."/>
            <person name="Madupu R."/>
            <person name="Nelson K.E."/>
            <person name="Nelson W.C."/>
            <person name="Paulsen I."/>
            <person name="Penn K."/>
            <person name="Ren Q."/>
            <person name="Rosovitz M.J."/>
            <person name="Selengut J.D."/>
            <person name="Shrivastava S."/>
            <person name="Sullivan S.A."/>
            <person name="Tapia R."/>
            <person name="Thompson L.S."/>
            <person name="Watkins K.L."/>
            <person name="Yang Q."/>
            <person name="Yu C."/>
            <person name="Zafar N."/>
            <person name="Zhou L."/>
            <person name="Kuske C.R."/>
        </authorList>
    </citation>
    <scope>NUCLEOTIDE SEQUENCE [LARGE SCALE GENOMIC DNA]</scope>
    <source>
        <strain>Ellin345</strain>
    </source>
</reference>
<name>ILVD_KORVE</name>
<dbReference type="EC" id="4.2.1.9" evidence="1"/>
<dbReference type="EMBL" id="CP000360">
    <property type="protein sequence ID" value="ABF42110.1"/>
    <property type="molecule type" value="Genomic_DNA"/>
</dbReference>
<dbReference type="RefSeq" id="WP_011523909.1">
    <property type="nucleotide sequence ID" value="NC_008009.1"/>
</dbReference>
<dbReference type="SMR" id="Q1ILZ0"/>
<dbReference type="STRING" id="204669.Acid345_3109"/>
<dbReference type="EnsemblBacteria" id="ABF42110">
    <property type="protein sequence ID" value="ABF42110"/>
    <property type="gene ID" value="Acid345_3109"/>
</dbReference>
<dbReference type="KEGG" id="aba:Acid345_3109"/>
<dbReference type="eggNOG" id="COG0129">
    <property type="taxonomic scope" value="Bacteria"/>
</dbReference>
<dbReference type="HOGENOM" id="CLU_014271_4_2_0"/>
<dbReference type="OrthoDB" id="9807077at2"/>
<dbReference type="UniPathway" id="UPA00047">
    <property type="reaction ID" value="UER00057"/>
</dbReference>
<dbReference type="UniPathway" id="UPA00049">
    <property type="reaction ID" value="UER00061"/>
</dbReference>
<dbReference type="Proteomes" id="UP000002432">
    <property type="component" value="Chromosome"/>
</dbReference>
<dbReference type="GO" id="GO:0051537">
    <property type="term" value="F:2 iron, 2 sulfur cluster binding"/>
    <property type="evidence" value="ECO:0007669"/>
    <property type="project" value="UniProtKB-UniRule"/>
</dbReference>
<dbReference type="GO" id="GO:0004160">
    <property type="term" value="F:dihydroxy-acid dehydratase activity"/>
    <property type="evidence" value="ECO:0007669"/>
    <property type="project" value="UniProtKB-UniRule"/>
</dbReference>
<dbReference type="GO" id="GO:0000287">
    <property type="term" value="F:magnesium ion binding"/>
    <property type="evidence" value="ECO:0007669"/>
    <property type="project" value="UniProtKB-UniRule"/>
</dbReference>
<dbReference type="GO" id="GO:0009097">
    <property type="term" value="P:isoleucine biosynthetic process"/>
    <property type="evidence" value="ECO:0007669"/>
    <property type="project" value="UniProtKB-UniRule"/>
</dbReference>
<dbReference type="GO" id="GO:0009099">
    <property type="term" value="P:L-valine biosynthetic process"/>
    <property type="evidence" value="ECO:0007669"/>
    <property type="project" value="UniProtKB-UniRule"/>
</dbReference>
<dbReference type="FunFam" id="3.50.30.80:FF:000001">
    <property type="entry name" value="Dihydroxy-acid dehydratase"/>
    <property type="match status" value="1"/>
</dbReference>
<dbReference type="Gene3D" id="3.50.30.80">
    <property type="entry name" value="IlvD/EDD C-terminal domain-like"/>
    <property type="match status" value="1"/>
</dbReference>
<dbReference type="HAMAP" id="MF_00012">
    <property type="entry name" value="IlvD"/>
    <property type="match status" value="1"/>
</dbReference>
<dbReference type="InterPro" id="IPR050165">
    <property type="entry name" value="DHAD_IlvD/Edd"/>
</dbReference>
<dbReference type="InterPro" id="IPR042096">
    <property type="entry name" value="Dihydro-acid_dehy_C"/>
</dbReference>
<dbReference type="InterPro" id="IPR004404">
    <property type="entry name" value="DihydroxyA_deHydtase"/>
</dbReference>
<dbReference type="InterPro" id="IPR020558">
    <property type="entry name" value="DiOHA_6PGluconate_deHydtase_CS"/>
</dbReference>
<dbReference type="InterPro" id="IPR056740">
    <property type="entry name" value="ILV_EDD_C"/>
</dbReference>
<dbReference type="InterPro" id="IPR000581">
    <property type="entry name" value="ILV_EDD_N"/>
</dbReference>
<dbReference type="InterPro" id="IPR037237">
    <property type="entry name" value="IlvD/EDD_N"/>
</dbReference>
<dbReference type="NCBIfam" id="TIGR00110">
    <property type="entry name" value="ilvD"/>
    <property type="match status" value="1"/>
</dbReference>
<dbReference type="NCBIfam" id="NF002068">
    <property type="entry name" value="PRK00911.1"/>
    <property type="match status" value="1"/>
</dbReference>
<dbReference type="PANTHER" id="PTHR21000">
    <property type="entry name" value="DIHYDROXY-ACID DEHYDRATASE DAD"/>
    <property type="match status" value="1"/>
</dbReference>
<dbReference type="PANTHER" id="PTHR21000:SF5">
    <property type="entry name" value="DIHYDROXY-ACID DEHYDRATASE, MITOCHONDRIAL"/>
    <property type="match status" value="1"/>
</dbReference>
<dbReference type="Pfam" id="PF24877">
    <property type="entry name" value="ILV_EDD_C"/>
    <property type="match status" value="1"/>
</dbReference>
<dbReference type="Pfam" id="PF00920">
    <property type="entry name" value="ILVD_EDD_N"/>
    <property type="match status" value="1"/>
</dbReference>
<dbReference type="SUPFAM" id="SSF143975">
    <property type="entry name" value="IlvD/EDD N-terminal domain-like"/>
    <property type="match status" value="1"/>
</dbReference>
<dbReference type="SUPFAM" id="SSF52016">
    <property type="entry name" value="LeuD/IlvD-like"/>
    <property type="match status" value="1"/>
</dbReference>
<dbReference type="PROSITE" id="PS00886">
    <property type="entry name" value="ILVD_EDD_1"/>
    <property type="match status" value="1"/>
</dbReference>
<dbReference type="PROSITE" id="PS00887">
    <property type="entry name" value="ILVD_EDD_2"/>
    <property type="match status" value="1"/>
</dbReference>
<evidence type="ECO:0000255" key="1">
    <source>
        <dbReference type="HAMAP-Rule" id="MF_00012"/>
    </source>
</evidence>
<evidence type="ECO:0000256" key="2">
    <source>
        <dbReference type="SAM" id="MobiDB-lite"/>
    </source>
</evidence>
<feature type="chain" id="PRO_0000321587" description="Dihydroxy-acid dehydratase">
    <location>
        <begin position="1"/>
        <end position="573"/>
    </location>
</feature>
<feature type="region of interest" description="Disordered" evidence="2">
    <location>
        <begin position="1"/>
        <end position="21"/>
    </location>
</feature>
<feature type="compositionally biased region" description="Basic and acidic residues" evidence="2">
    <location>
        <begin position="1"/>
        <end position="14"/>
    </location>
</feature>
<feature type="active site" description="Proton acceptor" evidence="1">
    <location>
        <position position="476"/>
    </location>
</feature>
<feature type="binding site" evidence="1">
    <location>
        <position position="55"/>
    </location>
    <ligand>
        <name>[2Fe-2S] cluster</name>
        <dbReference type="ChEBI" id="CHEBI:190135"/>
    </ligand>
</feature>
<feature type="binding site" evidence="1">
    <location>
        <position position="87"/>
    </location>
    <ligand>
        <name>Mg(2+)</name>
        <dbReference type="ChEBI" id="CHEBI:18420"/>
    </ligand>
</feature>
<feature type="binding site" evidence="1">
    <location>
        <position position="128"/>
    </location>
    <ligand>
        <name>[2Fe-2S] cluster</name>
        <dbReference type="ChEBI" id="CHEBI:190135"/>
    </ligand>
</feature>
<feature type="binding site" evidence="1">
    <location>
        <position position="129"/>
    </location>
    <ligand>
        <name>Mg(2+)</name>
        <dbReference type="ChEBI" id="CHEBI:18420"/>
    </ligand>
</feature>
<feature type="binding site" description="via carbamate group" evidence="1">
    <location>
        <position position="130"/>
    </location>
    <ligand>
        <name>Mg(2+)</name>
        <dbReference type="ChEBI" id="CHEBI:18420"/>
    </ligand>
</feature>
<feature type="binding site" evidence="1">
    <location>
        <position position="200"/>
    </location>
    <ligand>
        <name>[2Fe-2S] cluster</name>
        <dbReference type="ChEBI" id="CHEBI:190135"/>
    </ligand>
</feature>
<feature type="binding site" evidence="1">
    <location>
        <position position="450"/>
    </location>
    <ligand>
        <name>Mg(2+)</name>
        <dbReference type="ChEBI" id="CHEBI:18420"/>
    </ligand>
</feature>
<feature type="modified residue" description="N6-carboxylysine" evidence="1">
    <location>
        <position position="130"/>
    </location>
</feature>
<keyword id="KW-0001">2Fe-2S</keyword>
<keyword id="KW-0028">Amino-acid biosynthesis</keyword>
<keyword id="KW-0100">Branched-chain amino acid biosynthesis</keyword>
<keyword id="KW-0408">Iron</keyword>
<keyword id="KW-0411">Iron-sulfur</keyword>
<keyword id="KW-0456">Lyase</keyword>
<keyword id="KW-0460">Magnesium</keyword>
<keyword id="KW-0479">Metal-binding</keyword>
<keyword id="KW-1185">Reference proteome</keyword>
<accession>Q1ILZ0</accession>
<sequence>MTEKSPKPHKRSDAITEGPNRAPARAMLRAAGFTPEDLRKPIIGIANTWIEIGPCNLHLRELAEHIKQGVREAGGTPMEFNTVSISDGITMGSEGMKASLVSREVIADSIELVARGNLFDGLIALSGCDKTIPGTIMALERLDIPGLMLYGGSIAPGKFHAQKVTIQDVFEAVGTHARGKMSDADLEELEHNACPGAGACGGQFTANTMSMCGEFLGISPMGANSVPAMTVEKQQVARRCGHLVMELVRRDIRPSQIITRKAIENAIASVAASGGSTNAVLHLLAIAHEMDVELNIEDFDKISSRTPLLCELKPAGRFTATDLHDAGGIPLVAQRLLEANLLHADALTVTGKTIAEEAKQAKETPGQEVVRPLTDPIKATGGLMILKGNLASEGCVVKLVGHKKLFFEGPARVFESEEEAFAGVEDRTIQAGEVVVVRYEGPKGGPGMREMLGVTAAIAGTELAETVALITDGRFSGATRGLSVGHVAPEAANGGAIAVVRNGDIITLDVERRELRVHLTDAELEARLRNWRAPEPRYKRGVFAKYASTVSSASFGAVTGSTIENKTLAGSTK</sequence>
<gene>
    <name evidence="1" type="primary">ilvD</name>
    <name type="ordered locus">Acid345_3109</name>
</gene>